<proteinExistence type="inferred from homology"/>
<protein>
    <recommendedName>
        <fullName evidence="1">dITP/XTP pyrophosphatase</fullName>
        <ecNumber evidence="1">3.6.1.66</ecNumber>
    </recommendedName>
    <alternativeName>
        <fullName evidence="1">Non-canonical purine NTP pyrophosphatase</fullName>
    </alternativeName>
    <alternativeName>
        <fullName evidence="1">Non-standard purine NTP pyrophosphatase</fullName>
    </alternativeName>
    <alternativeName>
        <fullName evidence="1">Nucleoside-triphosphate diphosphatase</fullName>
    </alternativeName>
    <alternativeName>
        <fullName evidence="1">Nucleoside-triphosphate pyrophosphatase</fullName>
        <shortName evidence="1">NTPase</shortName>
    </alternativeName>
</protein>
<keyword id="KW-0378">Hydrolase</keyword>
<keyword id="KW-0460">Magnesium</keyword>
<keyword id="KW-0479">Metal-binding</keyword>
<keyword id="KW-0546">Nucleotide metabolism</keyword>
<keyword id="KW-0547">Nucleotide-binding</keyword>
<organism>
    <name type="scientific">Leptospira biflexa serovar Patoc (strain Patoc 1 / Ames)</name>
    <dbReference type="NCBI Taxonomy" id="355278"/>
    <lineage>
        <taxon>Bacteria</taxon>
        <taxon>Pseudomonadati</taxon>
        <taxon>Spirochaetota</taxon>
        <taxon>Spirochaetia</taxon>
        <taxon>Leptospirales</taxon>
        <taxon>Leptospiraceae</taxon>
        <taxon>Leptospira</taxon>
    </lineage>
</organism>
<accession>B0SE38</accession>
<sequence length="198" mass="22059">MTKKTLAFASGSDHKTKEMQMLLSPFGYEIVTPKILGIPFSPEETESTFVGNSFIKSKELFRLTGFPSFADDSGISVDALGGEPGVLSARFGGPGLSDKDRALYLLNKLGTNHNRKAHYSCVVSFVDANHQVSFEGKVEGLIASDYDELGKFGFGYDPIFYYPEFGKRFSEVPEGEKNKVSHRKKAMELFLEWFQTIQ</sequence>
<comment type="function">
    <text evidence="1">Pyrophosphatase that catalyzes the hydrolysis of nucleoside triphosphates to their monophosphate derivatives, with a high preference for the non-canonical purine nucleotides XTP (xanthosine triphosphate), dITP (deoxyinosine triphosphate) and ITP. Seems to function as a house-cleaning enzyme that removes non-canonical purine nucleotides from the nucleotide pool, thus preventing their incorporation into DNA/RNA and avoiding chromosomal lesions.</text>
</comment>
<comment type="catalytic activity">
    <reaction evidence="1">
        <text>XTP + H2O = XMP + diphosphate + H(+)</text>
        <dbReference type="Rhea" id="RHEA:28610"/>
        <dbReference type="ChEBI" id="CHEBI:15377"/>
        <dbReference type="ChEBI" id="CHEBI:15378"/>
        <dbReference type="ChEBI" id="CHEBI:33019"/>
        <dbReference type="ChEBI" id="CHEBI:57464"/>
        <dbReference type="ChEBI" id="CHEBI:61314"/>
        <dbReference type="EC" id="3.6.1.66"/>
    </reaction>
</comment>
<comment type="catalytic activity">
    <reaction evidence="1">
        <text>dITP + H2O = dIMP + diphosphate + H(+)</text>
        <dbReference type="Rhea" id="RHEA:28342"/>
        <dbReference type="ChEBI" id="CHEBI:15377"/>
        <dbReference type="ChEBI" id="CHEBI:15378"/>
        <dbReference type="ChEBI" id="CHEBI:33019"/>
        <dbReference type="ChEBI" id="CHEBI:61194"/>
        <dbReference type="ChEBI" id="CHEBI:61382"/>
        <dbReference type="EC" id="3.6.1.66"/>
    </reaction>
</comment>
<comment type="catalytic activity">
    <reaction evidence="1">
        <text>ITP + H2O = IMP + diphosphate + H(+)</text>
        <dbReference type="Rhea" id="RHEA:29399"/>
        <dbReference type="ChEBI" id="CHEBI:15377"/>
        <dbReference type="ChEBI" id="CHEBI:15378"/>
        <dbReference type="ChEBI" id="CHEBI:33019"/>
        <dbReference type="ChEBI" id="CHEBI:58053"/>
        <dbReference type="ChEBI" id="CHEBI:61402"/>
        <dbReference type="EC" id="3.6.1.66"/>
    </reaction>
</comment>
<comment type="cofactor">
    <cofactor evidence="1">
        <name>Mg(2+)</name>
        <dbReference type="ChEBI" id="CHEBI:18420"/>
    </cofactor>
    <text evidence="1">Binds 1 Mg(2+) ion per subunit.</text>
</comment>
<comment type="subunit">
    <text evidence="1">Homodimer.</text>
</comment>
<comment type="similarity">
    <text evidence="1">Belongs to the HAM1 NTPase family.</text>
</comment>
<name>IXTPA_LEPBA</name>
<gene>
    <name type="ordered locus">LBF_2585</name>
</gene>
<dbReference type="EC" id="3.6.1.66" evidence="1"/>
<dbReference type="EMBL" id="CP000777">
    <property type="protein sequence ID" value="ABZ95069.1"/>
    <property type="molecule type" value="Genomic_DNA"/>
</dbReference>
<dbReference type="RefSeq" id="WP_012476385.1">
    <property type="nucleotide sequence ID" value="NC_010842.1"/>
</dbReference>
<dbReference type="SMR" id="B0SE38"/>
<dbReference type="KEGG" id="lbf:LBF_2585"/>
<dbReference type="HOGENOM" id="CLU_082080_0_2_12"/>
<dbReference type="GO" id="GO:0005829">
    <property type="term" value="C:cytosol"/>
    <property type="evidence" value="ECO:0007669"/>
    <property type="project" value="TreeGrafter"/>
</dbReference>
<dbReference type="GO" id="GO:0035870">
    <property type="term" value="F:dITP diphosphatase activity"/>
    <property type="evidence" value="ECO:0007669"/>
    <property type="project" value="RHEA"/>
</dbReference>
<dbReference type="GO" id="GO:0036220">
    <property type="term" value="F:ITP diphosphatase activity"/>
    <property type="evidence" value="ECO:0007669"/>
    <property type="project" value="UniProtKB-EC"/>
</dbReference>
<dbReference type="GO" id="GO:0046872">
    <property type="term" value="F:metal ion binding"/>
    <property type="evidence" value="ECO:0007669"/>
    <property type="project" value="UniProtKB-KW"/>
</dbReference>
<dbReference type="GO" id="GO:0000166">
    <property type="term" value="F:nucleotide binding"/>
    <property type="evidence" value="ECO:0007669"/>
    <property type="project" value="UniProtKB-KW"/>
</dbReference>
<dbReference type="GO" id="GO:0017111">
    <property type="term" value="F:ribonucleoside triphosphate phosphatase activity"/>
    <property type="evidence" value="ECO:0007669"/>
    <property type="project" value="InterPro"/>
</dbReference>
<dbReference type="GO" id="GO:0036222">
    <property type="term" value="F:XTP diphosphatase activity"/>
    <property type="evidence" value="ECO:0007669"/>
    <property type="project" value="RHEA"/>
</dbReference>
<dbReference type="GO" id="GO:0009117">
    <property type="term" value="P:nucleotide metabolic process"/>
    <property type="evidence" value="ECO:0007669"/>
    <property type="project" value="UniProtKB-KW"/>
</dbReference>
<dbReference type="GO" id="GO:0009146">
    <property type="term" value="P:purine nucleoside triphosphate catabolic process"/>
    <property type="evidence" value="ECO:0007669"/>
    <property type="project" value="UniProtKB-UniRule"/>
</dbReference>
<dbReference type="CDD" id="cd00515">
    <property type="entry name" value="HAM1"/>
    <property type="match status" value="1"/>
</dbReference>
<dbReference type="FunFam" id="3.90.950.10:FF:000001">
    <property type="entry name" value="dITP/XTP pyrophosphatase"/>
    <property type="match status" value="1"/>
</dbReference>
<dbReference type="Gene3D" id="3.90.950.10">
    <property type="match status" value="1"/>
</dbReference>
<dbReference type="HAMAP" id="MF_01405">
    <property type="entry name" value="Non_canon_purine_NTPase"/>
    <property type="match status" value="1"/>
</dbReference>
<dbReference type="InterPro" id="IPR020922">
    <property type="entry name" value="dITP/XTP_pyrophosphatase"/>
</dbReference>
<dbReference type="InterPro" id="IPR029001">
    <property type="entry name" value="ITPase-like_fam"/>
</dbReference>
<dbReference type="InterPro" id="IPR002637">
    <property type="entry name" value="RdgB/HAM1"/>
</dbReference>
<dbReference type="NCBIfam" id="TIGR00042">
    <property type="entry name" value="RdgB/HAM1 family non-canonical purine NTP pyrophosphatase"/>
    <property type="match status" value="1"/>
</dbReference>
<dbReference type="PANTHER" id="PTHR11067:SF9">
    <property type="entry name" value="INOSINE TRIPHOSPHATE PYROPHOSPHATASE"/>
    <property type="match status" value="1"/>
</dbReference>
<dbReference type="PANTHER" id="PTHR11067">
    <property type="entry name" value="INOSINE TRIPHOSPHATE PYROPHOSPHATASE/HAM1 PROTEIN"/>
    <property type="match status" value="1"/>
</dbReference>
<dbReference type="Pfam" id="PF01725">
    <property type="entry name" value="Ham1p_like"/>
    <property type="match status" value="1"/>
</dbReference>
<dbReference type="SUPFAM" id="SSF52972">
    <property type="entry name" value="ITPase-like"/>
    <property type="match status" value="1"/>
</dbReference>
<evidence type="ECO:0000255" key="1">
    <source>
        <dbReference type="HAMAP-Rule" id="MF_01405"/>
    </source>
</evidence>
<feature type="chain" id="PRO_1000145492" description="dITP/XTP pyrophosphatase">
    <location>
        <begin position="1"/>
        <end position="198"/>
    </location>
</feature>
<feature type="active site" description="Proton acceptor" evidence="1">
    <location>
        <position position="72"/>
    </location>
</feature>
<feature type="binding site" evidence="1">
    <location>
        <begin position="10"/>
        <end position="15"/>
    </location>
    <ligand>
        <name>substrate</name>
    </ligand>
</feature>
<feature type="binding site" evidence="1">
    <location>
        <position position="43"/>
    </location>
    <ligand>
        <name>Mg(2+)</name>
        <dbReference type="ChEBI" id="CHEBI:18420"/>
    </ligand>
</feature>
<feature type="binding site" evidence="1">
    <location>
        <position position="72"/>
    </location>
    <ligand>
        <name>Mg(2+)</name>
        <dbReference type="ChEBI" id="CHEBI:18420"/>
    </ligand>
</feature>
<feature type="binding site" evidence="1">
    <location>
        <position position="73"/>
    </location>
    <ligand>
        <name>substrate</name>
    </ligand>
</feature>
<feature type="binding site" evidence="1">
    <location>
        <begin position="154"/>
        <end position="157"/>
    </location>
    <ligand>
        <name>substrate</name>
    </ligand>
</feature>
<feature type="binding site" evidence="1">
    <location>
        <position position="177"/>
    </location>
    <ligand>
        <name>substrate</name>
    </ligand>
</feature>
<feature type="binding site" evidence="1">
    <location>
        <begin position="182"/>
        <end position="183"/>
    </location>
    <ligand>
        <name>substrate</name>
    </ligand>
</feature>
<reference key="1">
    <citation type="journal article" date="2008" name="PLoS ONE">
        <title>Genome sequence of the saprophyte Leptospira biflexa provides insights into the evolution of Leptospira and the pathogenesis of leptospirosis.</title>
        <authorList>
            <person name="Picardeau M."/>
            <person name="Bulach D.M."/>
            <person name="Bouchier C."/>
            <person name="Zuerner R.L."/>
            <person name="Zidane N."/>
            <person name="Wilson P.J."/>
            <person name="Creno S."/>
            <person name="Kuczek E.S."/>
            <person name="Bommezzadri S."/>
            <person name="Davis J.C."/>
            <person name="McGrath A."/>
            <person name="Johnson M.J."/>
            <person name="Boursaux-Eude C."/>
            <person name="Seemann T."/>
            <person name="Rouy Z."/>
            <person name="Coppel R.L."/>
            <person name="Rood J.I."/>
            <person name="Lajus A."/>
            <person name="Davies J.K."/>
            <person name="Medigue C."/>
            <person name="Adler B."/>
        </authorList>
    </citation>
    <scope>NUCLEOTIDE SEQUENCE [LARGE SCALE GENOMIC DNA]</scope>
    <source>
        <strain>Patoc 1 / Ames</strain>
    </source>
</reference>